<comment type="function">
    <text evidence="1">Acts as a protein-folding catalyst that interacts with nascent polypeptides to catalyze the formation, isomerization, and reduction or oxidation of disulfide bonds.</text>
</comment>
<comment type="subcellular location">
    <subcellularLocation>
        <location evidence="5">Membrane</location>
        <topology evidence="5">Single-pass membrane protein</topology>
    </subcellularLocation>
</comment>
<comment type="tissue specificity">
    <text evidence="4">Widely expressed.</text>
</comment>
<comment type="similarity">
    <text evidence="5">Belongs to the protein disulfide isomerase family.</text>
</comment>
<accession>Q9LJU2</accession>
<reference key="1">
    <citation type="journal article" date="2000" name="DNA Res.">
        <title>Structural analysis of Arabidopsis thaliana chromosome 3. II. Sequence features of the 4,251,695 bp regions covered by 90 P1, TAC and BAC clones.</title>
        <authorList>
            <person name="Kaneko T."/>
            <person name="Katoh T."/>
            <person name="Sato S."/>
            <person name="Nakamura Y."/>
            <person name="Asamizu E."/>
            <person name="Tabata S."/>
        </authorList>
    </citation>
    <scope>NUCLEOTIDE SEQUENCE [LARGE SCALE GENOMIC DNA]</scope>
    <source>
        <strain>cv. Columbia</strain>
    </source>
</reference>
<reference key="2">
    <citation type="journal article" date="2017" name="Plant J.">
        <title>Araport11: a complete reannotation of the Arabidopsis thaliana reference genome.</title>
        <authorList>
            <person name="Cheng C.Y."/>
            <person name="Krishnakumar V."/>
            <person name="Chan A.P."/>
            <person name="Thibaud-Nissen F."/>
            <person name="Schobel S."/>
            <person name="Town C.D."/>
        </authorList>
    </citation>
    <scope>GENOME REANNOTATION</scope>
    <source>
        <strain>cv. Columbia</strain>
    </source>
</reference>
<reference key="3">
    <citation type="journal article" date="2003" name="Science">
        <title>Empirical analysis of transcriptional activity in the Arabidopsis genome.</title>
        <authorList>
            <person name="Yamada K."/>
            <person name="Lim J."/>
            <person name="Dale J.M."/>
            <person name="Chen H."/>
            <person name="Shinn P."/>
            <person name="Palm C.J."/>
            <person name="Southwick A.M."/>
            <person name="Wu H.C."/>
            <person name="Kim C.J."/>
            <person name="Nguyen M."/>
            <person name="Pham P.K."/>
            <person name="Cheuk R.F."/>
            <person name="Karlin-Newmann G."/>
            <person name="Liu S.X."/>
            <person name="Lam B."/>
            <person name="Sakano H."/>
            <person name="Wu T."/>
            <person name="Yu G."/>
            <person name="Miranda M."/>
            <person name="Quach H.L."/>
            <person name="Tripp M."/>
            <person name="Chang C.H."/>
            <person name="Lee J.M."/>
            <person name="Toriumi M.J."/>
            <person name="Chan M.M."/>
            <person name="Tang C.C."/>
            <person name="Onodera C.S."/>
            <person name="Deng J.M."/>
            <person name="Akiyama K."/>
            <person name="Ansari Y."/>
            <person name="Arakawa T."/>
            <person name="Banh J."/>
            <person name="Banno F."/>
            <person name="Bowser L."/>
            <person name="Brooks S.Y."/>
            <person name="Carninci P."/>
            <person name="Chao Q."/>
            <person name="Choy N."/>
            <person name="Enju A."/>
            <person name="Goldsmith A.D."/>
            <person name="Gurjal M."/>
            <person name="Hansen N.F."/>
            <person name="Hayashizaki Y."/>
            <person name="Johnson-Hopson C."/>
            <person name="Hsuan V.W."/>
            <person name="Iida K."/>
            <person name="Karnes M."/>
            <person name="Khan S."/>
            <person name="Koesema E."/>
            <person name="Ishida J."/>
            <person name="Jiang P.X."/>
            <person name="Jones T."/>
            <person name="Kawai J."/>
            <person name="Kamiya A."/>
            <person name="Meyers C."/>
            <person name="Nakajima M."/>
            <person name="Narusaka M."/>
            <person name="Seki M."/>
            <person name="Sakurai T."/>
            <person name="Satou M."/>
            <person name="Tamse R."/>
            <person name="Vaysberg M."/>
            <person name="Wallender E.K."/>
            <person name="Wong C."/>
            <person name="Yamamura Y."/>
            <person name="Yuan S."/>
            <person name="Shinozaki K."/>
            <person name="Davis R.W."/>
            <person name="Theologis A."/>
            <person name="Ecker J.R."/>
        </authorList>
    </citation>
    <scope>NUCLEOTIDE SEQUENCE [LARGE SCALE MRNA]</scope>
    <source>
        <strain>cv. Columbia</strain>
    </source>
</reference>
<reference key="4">
    <citation type="journal article" date="2005" name="Plant Physiol.">
        <title>Phylogenetic analyses identify 10 classes of the protein disulfide isomerase family in plants, including single-domain protein disulfide isomerase-related proteins.</title>
        <authorList>
            <person name="Houston N.L."/>
            <person name="Fan C."/>
            <person name="Xiang J.Q."/>
            <person name="Schulze J.M."/>
            <person name="Jung R."/>
            <person name="Boston R.S."/>
        </authorList>
    </citation>
    <scope>GENE FAMILY</scope>
    <scope>NOMENCLATURE</scope>
</reference>
<reference key="5">
    <citation type="journal article" date="2008" name="Mol. Genet. Genomics">
        <title>Endoplasmic reticulum stress activates the expression of a sub-group of protein disulfide isomerase genes and AtbZIP60 modulates the response in Arabidopsis thaliana.</title>
        <authorList>
            <person name="Lu D.-P."/>
            <person name="Christopher D.A."/>
        </authorList>
    </citation>
    <scope>TISSUE SPECIFICITY</scope>
</reference>
<reference key="6">
    <citation type="journal article" date="2010" name="BMC Plant Biol.">
        <title>The protein disulfide isomerase gene family in bread wheat (T. aestivum L.).</title>
        <authorList>
            <person name="d'Aloisio E."/>
            <person name="Paolacci A.R."/>
            <person name="Dhanapal A.P."/>
            <person name="Tanzarella O.A."/>
            <person name="Porceddu E."/>
            <person name="Ciaffi M."/>
        </authorList>
    </citation>
    <scope>GENE FAMILY</scope>
    <scope>NOMENCLATURE</scope>
</reference>
<organism>
    <name type="scientific">Arabidopsis thaliana</name>
    <name type="common">Mouse-ear cress</name>
    <dbReference type="NCBI Taxonomy" id="3702"/>
    <lineage>
        <taxon>Eukaryota</taxon>
        <taxon>Viridiplantae</taxon>
        <taxon>Streptophyta</taxon>
        <taxon>Embryophyta</taxon>
        <taxon>Tracheophyta</taxon>
        <taxon>Spermatophyta</taxon>
        <taxon>Magnoliopsida</taxon>
        <taxon>eudicotyledons</taxon>
        <taxon>Gunneridae</taxon>
        <taxon>Pentapetalae</taxon>
        <taxon>rosids</taxon>
        <taxon>malvids</taxon>
        <taxon>Brassicales</taxon>
        <taxon>Brassicaceae</taxon>
        <taxon>Camelineae</taxon>
        <taxon>Arabidopsis</taxon>
    </lineage>
</organism>
<proteinExistence type="evidence at transcript level"/>
<dbReference type="EMBL" id="AP000410">
    <property type="protein sequence ID" value="BAB01164.1"/>
    <property type="molecule type" value="Genomic_DNA"/>
</dbReference>
<dbReference type="EMBL" id="CP002686">
    <property type="protein sequence ID" value="AEE76398.1"/>
    <property type="molecule type" value="Genomic_DNA"/>
</dbReference>
<dbReference type="EMBL" id="AY050453">
    <property type="protein sequence ID" value="AAK91468.1"/>
    <property type="molecule type" value="mRNA"/>
</dbReference>
<dbReference type="RefSeq" id="NP_566664.1">
    <property type="nucleotide sequence ID" value="NM_112948.3"/>
</dbReference>
<dbReference type="SMR" id="Q9LJU2"/>
<dbReference type="FunCoup" id="Q9LJU2">
    <property type="interactions" value="1567"/>
</dbReference>
<dbReference type="STRING" id="3702.Q9LJU2"/>
<dbReference type="GlyCosmos" id="Q9LJU2">
    <property type="glycosylation" value="6 sites, No reported glycans"/>
</dbReference>
<dbReference type="GlyGen" id="Q9LJU2">
    <property type="glycosylation" value="6 sites"/>
</dbReference>
<dbReference type="iPTMnet" id="Q9LJU2"/>
<dbReference type="PaxDb" id="3702-AT3G20560.1"/>
<dbReference type="ProteomicsDB" id="236376"/>
<dbReference type="EnsemblPlants" id="AT3G20560.1">
    <property type="protein sequence ID" value="AT3G20560.1"/>
    <property type="gene ID" value="AT3G20560"/>
</dbReference>
<dbReference type="GeneID" id="821603"/>
<dbReference type="Gramene" id="AT3G20560.1">
    <property type="protein sequence ID" value="AT3G20560.1"/>
    <property type="gene ID" value="AT3G20560"/>
</dbReference>
<dbReference type="KEGG" id="ath:AT3G20560"/>
<dbReference type="Araport" id="AT3G20560"/>
<dbReference type="TAIR" id="AT3G20560">
    <property type="gene designation" value="PDIL5-3"/>
</dbReference>
<dbReference type="eggNOG" id="KOG2667">
    <property type="taxonomic scope" value="Eukaryota"/>
</dbReference>
<dbReference type="HOGENOM" id="CLU_034705_3_0_1"/>
<dbReference type="InParanoid" id="Q9LJU2"/>
<dbReference type="OMA" id="KVHTYSG"/>
<dbReference type="PhylomeDB" id="Q9LJU2"/>
<dbReference type="PRO" id="PR:Q9LJU2"/>
<dbReference type="Proteomes" id="UP000006548">
    <property type="component" value="Chromosome 3"/>
</dbReference>
<dbReference type="ExpressionAtlas" id="Q9LJU2">
    <property type="expression patterns" value="baseline and differential"/>
</dbReference>
<dbReference type="GO" id="GO:0016020">
    <property type="term" value="C:membrane"/>
    <property type="evidence" value="ECO:0007669"/>
    <property type="project" value="UniProtKB-SubCell"/>
</dbReference>
<dbReference type="GO" id="GO:0003756">
    <property type="term" value="F:protein disulfide isomerase activity"/>
    <property type="evidence" value="ECO:0000250"/>
    <property type="project" value="TAIR"/>
</dbReference>
<dbReference type="GO" id="GO:0046907">
    <property type="term" value="P:intracellular transport"/>
    <property type="evidence" value="ECO:0007669"/>
    <property type="project" value="UniProtKB-ARBA"/>
</dbReference>
<dbReference type="CDD" id="cd02961">
    <property type="entry name" value="PDI_a_family"/>
    <property type="match status" value="1"/>
</dbReference>
<dbReference type="FunFam" id="3.40.30.10:FF:000174">
    <property type="entry name" value="Protein disulfide-isomerase 5-4"/>
    <property type="match status" value="1"/>
</dbReference>
<dbReference type="Gene3D" id="3.40.30.10">
    <property type="entry name" value="Glutaredoxin"/>
    <property type="match status" value="1"/>
</dbReference>
<dbReference type="InterPro" id="IPR045888">
    <property type="entry name" value="Erv"/>
</dbReference>
<dbReference type="InterPro" id="IPR012936">
    <property type="entry name" value="Erv_C"/>
</dbReference>
<dbReference type="InterPro" id="IPR039542">
    <property type="entry name" value="Erv_N"/>
</dbReference>
<dbReference type="InterPro" id="IPR036249">
    <property type="entry name" value="Thioredoxin-like_sf"/>
</dbReference>
<dbReference type="InterPro" id="IPR013766">
    <property type="entry name" value="Thioredoxin_domain"/>
</dbReference>
<dbReference type="PANTHER" id="PTHR10984">
    <property type="entry name" value="ENDOPLASMIC RETICULUM-GOLGI INTERMEDIATE COMPARTMENT PROTEIN"/>
    <property type="match status" value="1"/>
</dbReference>
<dbReference type="PANTHER" id="PTHR10984:SF37">
    <property type="entry name" value="PROTEIN DISULFIDE-ISOMERASE 5-3"/>
    <property type="match status" value="1"/>
</dbReference>
<dbReference type="Pfam" id="PF07970">
    <property type="entry name" value="COPIIcoated_ERV"/>
    <property type="match status" value="1"/>
</dbReference>
<dbReference type="Pfam" id="PF13850">
    <property type="entry name" value="ERGIC_N"/>
    <property type="match status" value="1"/>
</dbReference>
<dbReference type="Pfam" id="PF00085">
    <property type="entry name" value="Thioredoxin"/>
    <property type="match status" value="1"/>
</dbReference>
<dbReference type="SUPFAM" id="SSF52833">
    <property type="entry name" value="Thioredoxin-like"/>
    <property type="match status" value="1"/>
</dbReference>
<dbReference type="PROSITE" id="PS51352">
    <property type="entry name" value="THIOREDOXIN_2"/>
    <property type="match status" value="1"/>
</dbReference>
<keyword id="KW-0325">Glycoprotein</keyword>
<keyword id="KW-0472">Membrane</keyword>
<keyword id="KW-1185">Reference proteome</keyword>
<keyword id="KW-0732">Signal</keyword>
<keyword id="KW-0812">Transmembrane</keyword>
<keyword id="KW-1133">Transmembrane helix</keyword>
<feature type="signal peptide">
    <location>
        <begin position="1"/>
        <end status="unknown"/>
    </location>
</feature>
<feature type="chain" id="PRO_0000400026" description="Protein disulfide-isomerase 5-3">
    <location>
        <begin status="unknown"/>
        <end position="483"/>
    </location>
</feature>
<feature type="transmembrane region" description="Helical" evidence="2">
    <location>
        <begin position="442"/>
        <end position="462"/>
    </location>
</feature>
<feature type="domain" description="Thioredoxin" evidence="3">
    <location>
        <begin position="133"/>
        <end position="263"/>
    </location>
</feature>
<feature type="active site" description="Nucleophile" evidence="1">
    <location>
        <position position="170"/>
    </location>
</feature>
<feature type="glycosylation site" description="N-linked (GlcNAc...) asparagine" evidence="2">
    <location>
        <position position="53"/>
    </location>
</feature>
<feature type="glycosylation site" description="N-linked (GlcNAc...) asparagine" evidence="2">
    <location>
        <position position="74"/>
    </location>
</feature>
<feature type="glycosylation site" description="N-linked (GlcNAc...) asparagine" evidence="2">
    <location>
        <position position="99"/>
    </location>
</feature>
<feature type="glycosylation site" description="N-linked (GlcNAc...) asparagine" evidence="2">
    <location>
        <position position="279"/>
    </location>
</feature>
<feature type="glycosylation site" description="N-linked (GlcNAc...) asparagine" evidence="2">
    <location>
        <position position="326"/>
    </location>
</feature>
<feature type="glycosylation site" description="N-linked (GlcNAc...) asparagine" evidence="2">
    <location>
        <position position="376"/>
    </location>
</feature>
<evidence type="ECO:0000250" key="1"/>
<evidence type="ECO:0000255" key="2"/>
<evidence type="ECO:0000255" key="3">
    <source>
        <dbReference type="PROSITE-ProRule" id="PRU00691"/>
    </source>
</evidence>
<evidence type="ECO:0000269" key="4">
    <source>
    </source>
</evidence>
<evidence type="ECO:0000305" key="5"/>
<gene>
    <name type="primary">PDIL5-3</name>
    <name type="synonym">PDI12</name>
    <name type="synonym">PDIL8-1</name>
    <name type="ordered locus">At3g20560</name>
    <name type="ORF">K10D20.9</name>
</gene>
<name>PDI53_ARATH</name>
<sequence length="483" mass="53996">MVSSTKLKSVDFYRKIPRDLTEASLSGAGLSIVAALFMMFLFGMELSSYLEVNTTTAVIVDKSSDGDFLRIDFNISFPALSCEFASVDVSDVLGTNRLNITKTVRKFPIDPHLRSTGAEFHSGLALHNINHGEETKEEFPDGAIPLTSASFEALSHHFPILVVNFNAPWCYWSNRLKPSWEKAANIIKQRYDPEADGRVLLGNVDCTEEPALCKRNHIQGYPSIRIFRKGSDLREDHGHHEHESYYGDRDTDSIVKMVEGLVAPIHPETHKVALDGKSNDTVKHLKKGPVTGGCRVEGYVRVKKVPGNLVISAHSGAHSFDSSQMNMSHVVSHFSFGRMISPRLLTDMKRLLPYLGLSHDRLDGKAFINQHEFGANVTIEHYLQTVKTEVITRRSGQEHSLIEEYEYTAHSSVAQTYYLPVAKFHFELSPMQILITENPKSFSHFITNLCAIIGGVFTVAGILDSIFHNTVRLVKKVELGKNI</sequence>
<protein>
    <recommendedName>
        <fullName>Protein disulfide-isomerase 5-3</fullName>
        <shortName>AtPDIL5-3</shortName>
    </recommendedName>
    <alternativeName>
        <fullName>Protein disulfide-isomerase 12</fullName>
        <shortName>PDI12</shortName>
    </alternativeName>
    <alternativeName>
        <fullName>Protein disulfide-isomerase 8-1</fullName>
        <shortName>AtPDIL8-1</shortName>
    </alternativeName>
</protein>